<evidence type="ECO:0000255" key="1">
    <source>
        <dbReference type="HAMAP-Rule" id="MF_00111"/>
    </source>
</evidence>
<reference key="1">
    <citation type="submission" date="2008-10" db="EMBL/GenBank/DDBJ databases">
        <title>The complete genome sequence of Helicobacter pylori strain P12.</title>
        <authorList>
            <person name="Fischer W."/>
            <person name="Windhager L."/>
            <person name="Karnholz A."/>
            <person name="Zeiller M."/>
            <person name="Zimmer R."/>
            <person name="Haas R."/>
        </authorList>
    </citation>
    <scope>NUCLEOTIDE SEQUENCE [LARGE SCALE GENOMIC DNA]</scope>
    <source>
        <strain>P12</strain>
    </source>
</reference>
<gene>
    <name evidence="1" type="primary">murA</name>
    <name type="ordered locus">HPP12_0661</name>
</gene>
<dbReference type="EC" id="2.5.1.7" evidence="1"/>
<dbReference type="EMBL" id="CP001217">
    <property type="protein sequence ID" value="ACJ07814.1"/>
    <property type="molecule type" value="Genomic_DNA"/>
</dbReference>
<dbReference type="SMR" id="B6JLN6"/>
<dbReference type="KEGG" id="hpp:HPP12_0661"/>
<dbReference type="HOGENOM" id="CLU_027387_0_0_7"/>
<dbReference type="UniPathway" id="UPA00219"/>
<dbReference type="Proteomes" id="UP000008198">
    <property type="component" value="Chromosome"/>
</dbReference>
<dbReference type="GO" id="GO:0005737">
    <property type="term" value="C:cytoplasm"/>
    <property type="evidence" value="ECO:0007669"/>
    <property type="project" value="UniProtKB-SubCell"/>
</dbReference>
<dbReference type="GO" id="GO:0008760">
    <property type="term" value="F:UDP-N-acetylglucosamine 1-carboxyvinyltransferase activity"/>
    <property type="evidence" value="ECO:0007669"/>
    <property type="project" value="UniProtKB-UniRule"/>
</dbReference>
<dbReference type="GO" id="GO:0051301">
    <property type="term" value="P:cell division"/>
    <property type="evidence" value="ECO:0007669"/>
    <property type="project" value="UniProtKB-KW"/>
</dbReference>
<dbReference type="GO" id="GO:0071555">
    <property type="term" value="P:cell wall organization"/>
    <property type="evidence" value="ECO:0007669"/>
    <property type="project" value="UniProtKB-KW"/>
</dbReference>
<dbReference type="GO" id="GO:0009252">
    <property type="term" value="P:peptidoglycan biosynthetic process"/>
    <property type="evidence" value="ECO:0007669"/>
    <property type="project" value="UniProtKB-UniRule"/>
</dbReference>
<dbReference type="GO" id="GO:0008360">
    <property type="term" value="P:regulation of cell shape"/>
    <property type="evidence" value="ECO:0007669"/>
    <property type="project" value="UniProtKB-KW"/>
</dbReference>
<dbReference type="GO" id="GO:0019277">
    <property type="term" value="P:UDP-N-acetylgalactosamine biosynthetic process"/>
    <property type="evidence" value="ECO:0007669"/>
    <property type="project" value="InterPro"/>
</dbReference>
<dbReference type="CDD" id="cd01555">
    <property type="entry name" value="UdpNAET"/>
    <property type="match status" value="1"/>
</dbReference>
<dbReference type="FunFam" id="3.65.10.10:FF:000001">
    <property type="entry name" value="UDP-N-acetylglucosamine 1-carboxyvinyltransferase"/>
    <property type="match status" value="1"/>
</dbReference>
<dbReference type="Gene3D" id="3.65.10.10">
    <property type="entry name" value="Enolpyruvate transferase domain"/>
    <property type="match status" value="2"/>
</dbReference>
<dbReference type="HAMAP" id="MF_00111">
    <property type="entry name" value="MurA"/>
    <property type="match status" value="1"/>
</dbReference>
<dbReference type="InterPro" id="IPR001986">
    <property type="entry name" value="Enolpyruvate_Tfrase_dom"/>
</dbReference>
<dbReference type="InterPro" id="IPR036968">
    <property type="entry name" value="Enolpyruvate_Tfrase_sf"/>
</dbReference>
<dbReference type="InterPro" id="IPR050068">
    <property type="entry name" value="MurA_subfamily"/>
</dbReference>
<dbReference type="InterPro" id="IPR013792">
    <property type="entry name" value="RNA3'P_cycl/enolpyr_Trfase_a/b"/>
</dbReference>
<dbReference type="InterPro" id="IPR005750">
    <property type="entry name" value="UDP_GlcNAc_COvinyl_MurA"/>
</dbReference>
<dbReference type="NCBIfam" id="TIGR01072">
    <property type="entry name" value="murA"/>
    <property type="match status" value="1"/>
</dbReference>
<dbReference type="NCBIfam" id="NF006873">
    <property type="entry name" value="PRK09369.1"/>
    <property type="match status" value="1"/>
</dbReference>
<dbReference type="PANTHER" id="PTHR43783">
    <property type="entry name" value="UDP-N-ACETYLGLUCOSAMINE 1-CARBOXYVINYLTRANSFERASE"/>
    <property type="match status" value="1"/>
</dbReference>
<dbReference type="PANTHER" id="PTHR43783:SF1">
    <property type="entry name" value="UDP-N-ACETYLGLUCOSAMINE 1-CARBOXYVINYLTRANSFERASE"/>
    <property type="match status" value="1"/>
</dbReference>
<dbReference type="Pfam" id="PF00275">
    <property type="entry name" value="EPSP_synthase"/>
    <property type="match status" value="1"/>
</dbReference>
<dbReference type="SUPFAM" id="SSF55205">
    <property type="entry name" value="EPT/RTPC-like"/>
    <property type="match status" value="1"/>
</dbReference>
<keyword id="KW-0131">Cell cycle</keyword>
<keyword id="KW-0132">Cell division</keyword>
<keyword id="KW-0133">Cell shape</keyword>
<keyword id="KW-0961">Cell wall biogenesis/degradation</keyword>
<keyword id="KW-0963">Cytoplasm</keyword>
<keyword id="KW-0573">Peptidoglycan synthesis</keyword>
<keyword id="KW-0670">Pyruvate</keyword>
<keyword id="KW-0808">Transferase</keyword>
<accession>B6JLN6</accession>
<name>MURA_HELP2</name>
<comment type="function">
    <text evidence="1">Cell wall formation. Adds enolpyruvyl to UDP-N-acetylglucosamine.</text>
</comment>
<comment type="catalytic activity">
    <reaction evidence="1">
        <text>phosphoenolpyruvate + UDP-N-acetyl-alpha-D-glucosamine = UDP-N-acetyl-3-O-(1-carboxyvinyl)-alpha-D-glucosamine + phosphate</text>
        <dbReference type="Rhea" id="RHEA:18681"/>
        <dbReference type="ChEBI" id="CHEBI:43474"/>
        <dbReference type="ChEBI" id="CHEBI:57705"/>
        <dbReference type="ChEBI" id="CHEBI:58702"/>
        <dbReference type="ChEBI" id="CHEBI:68483"/>
        <dbReference type="EC" id="2.5.1.7"/>
    </reaction>
</comment>
<comment type="pathway">
    <text evidence="1">Cell wall biogenesis; peptidoglycan biosynthesis.</text>
</comment>
<comment type="subcellular location">
    <subcellularLocation>
        <location evidence="1">Cytoplasm</location>
    </subcellularLocation>
</comment>
<comment type="similarity">
    <text evidence="1">Belongs to the EPSP synthase family. MurA subfamily.</text>
</comment>
<sequence length="422" mass="45773">MDFLEIVGQVPLKGGVEISGAKNSALPILAATLLSQQEVKIKSLPQVVDIKAMALLLQNLGAELEWLDPNTLQIGAKSLHHTEATYDLVRKMRASILVLGPLLARFKECLVSLPGGCAIGARPVDLHLKAMQQLGAEIKIEQGYIHAKASKGLKGNDILFDKISVTGTENALMAASLAKGITRIINAAKEPEIAQLCTFLQSGGVEIEGVGSSELKIRGVENDALNLKDIQIIPDRIEAGTYLCVGAITNSQLKIHRIIPNHLQAITDKLIEIGFSLDIQENSIEIYPAKKRQAFEITTKEYPGFPTDMQAQFMALATQCLGTSVIEETLFENRFMHASELQRLGANISLKTNVATISGSTELTGSDVMATDLRASSALILAALVAKGVSRVHRIYHLDRGYERLEDKINALGAKVLRLKEK</sequence>
<proteinExistence type="inferred from homology"/>
<feature type="chain" id="PRO_1000094694" description="UDP-N-acetylglucosamine 1-carboxyvinyltransferase">
    <location>
        <begin position="1"/>
        <end position="422"/>
    </location>
</feature>
<feature type="active site" description="Proton donor" evidence="1">
    <location>
        <position position="117"/>
    </location>
</feature>
<feature type="binding site" evidence="1">
    <location>
        <begin position="22"/>
        <end position="23"/>
    </location>
    <ligand>
        <name>phosphoenolpyruvate</name>
        <dbReference type="ChEBI" id="CHEBI:58702"/>
    </ligand>
</feature>
<feature type="binding site" evidence="1">
    <location>
        <position position="93"/>
    </location>
    <ligand>
        <name>UDP-N-acetyl-alpha-D-glucosamine</name>
        <dbReference type="ChEBI" id="CHEBI:57705"/>
    </ligand>
</feature>
<feature type="binding site" evidence="1">
    <location>
        <begin position="122"/>
        <end position="126"/>
    </location>
    <ligand>
        <name>UDP-N-acetyl-alpha-D-glucosamine</name>
        <dbReference type="ChEBI" id="CHEBI:57705"/>
    </ligand>
</feature>
<feature type="binding site" evidence="1">
    <location>
        <position position="308"/>
    </location>
    <ligand>
        <name>UDP-N-acetyl-alpha-D-glucosamine</name>
        <dbReference type="ChEBI" id="CHEBI:57705"/>
    </ligand>
</feature>
<feature type="binding site" evidence="1">
    <location>
        <position position="330"/>
    </location>
    <ligand>
        <name>UDP-N-acetyl-alpha-D-glucosamine</name>
        <dbReference type="ChEBI" id="CHEBI:57705"/>
    </ligand>
</feature>
<feature type="modified residue" description="2-(S-cysteinyl)pyruvic acid O-phosphothioketal" evidence="1">
    <location>
        <position position="117"/>
    </location>
</feature>
<protein>
    <recommendedName>
        <fullName evidence="1">UDP-N-acetylglucosamine 1-carboxyvinyltransferase</fullName>
        <ecNumber evidence="1">2.5.1.7</ecNumber>
    </recommendedName>
    <alternativeName>
        <fullName evidence="1">Enoylpyruvate transferase</fullName>
    </alternativeName>
    <alternativeName>
        <fullName evidence="1">UDP-N-acetylglucosamine enolpyruvyl transferase</fullName>
        <shortName evidence="1">EPT</shortName>
    </alternativeName>
</protein>
<organism>
    <name type="scientific">Helicobacter pylori (strain P12)</name>
    <dbReference type="NCBI Taxonomy" id="570508"/>
    <lineage>
        <taxon>Bacteria</taxon>
        <taxon>Pseudomonadati</taxon>
        <taxon>Campylobacterota</taxon>
        <taxon>Epsilonproteobacteria</taxon>
        <taxon>Campylobacterales</taxon>
        <taxon>Helicobacteraceae</taxon>
        <taxon>Helicobacter</taxon>
    </lineage>
</organism>